<reference key="1">
    <citation type="journal article" date="2006" name="PLoS Genet.">
        <title>Who ate whom? Adaptive Helicobacter genomic changes that accompanied a host jump from early humans to large felines.</title>
        <authorList>
            <person name="Eppinger M."/>
            <person name="Baar C."/>
            <person name="Linz B."/>
            <person name="Raddatz G."/>
            <person name="Lanz C."/>
            <person name="Keller H."/>
            <person name="Morelli G."/>
            <person name="Gressmann H."/>
            <person name="Achtman M."/>
            <person name="Schuster S.C."/>
        </authorList>
    </citation>
    <scope>NUCLEOTIDE SEQUENCE [LARGE SCALE GENOMIC DNA]</scope>
    <source>
        <strain>Sheeba</strain>
    </source>
</reference>
<dbReference type="EMBL" id="AM260522">
    <property type="protein sequence ID" value="CAJ99011.1"/>
    <property type="molecule type" value="Genomic_DNA"/>
</dbReference>
<dbReference type="RefSeq" id="WP_000135247.1">
    <property type="nucleotide sequence ID" value="NC_008229.1"/>
</dbReference>
<dbReference type="SMR" id="Q17ZB5"/>
<dbReference type="STRING" id="382638.Hac_0159"/>
<dbReference type="GeneID" id="31757690"/>
<dbReference type="KEGG" id="hac:Hac_0159"/>
<dbReference type="eggNOG" id="COG0522">
    <property type="taxonomic scope" value="Bacteria"/>
</dbReference>
<dbReference type="HOGENOM" id="CLU_092403_0_2_7"/>
<dbReference type="OrthoDB" id="9803672at2"/>
<dbReference type="BioCyc" id="HACI382638:HAC_RS00705-MONOMER"/>
<dbReference type="Proteomes" id="UP000000775">
    <property type="component" value="Chromosome"/>
</dbReference>
<dbReference type="GO" id="GO:0015935">
    <property type="term" value="C:small ribosomal subunit"/>
    <property type="evidence" value="ECO:0007669"/>
    <property type="project" value="InterPro"/>
</dbReference>
<dbReference type="GO" id="GO:0019843">
    <property type="term" value="F:rRNA binding"/>
    <property type="evidence" value="ECO:0007669"/>
    <property type="project" value="UniProtKB-UniRule"/>
</dbReference>
<dbReference type="GO" id="GO:0003735">
    <property type="term" value="F:structural constituent of ribosome"/>
    <property type="evidence" value="ECO:0007669"/>
    <property type="project" value="InterPro"/>
</dbReference>
<dbReference type="GO" id="GO:0042274">
    <property type="term" value="P:ribosomal small subunit biogenesis"/>
    <property type="evidence" value="ECO:0007669"/>
    <property type="project" value="TreeGrafter"/>
</dbReference>
<dbReference type="GO" id="GO:0006412">
    <property type="term" value="P:translation"/>
    <property type="evidence" value="ECO:0007669"/>
    <property type="project" value="UniProtKB-UniRule"/>
</dbReference>
<dbReference type="CDD" id="cd00165">
    <property type="entry name" value="S4"/>
    <property type="match status" value="1"/>
</dbReference>
<dbReference type="FunFam" id="1.10.1050.10:FF:000001">
    <property type="entry name" value="30S ribosomal protein S4"/>
    <property type="match status" value="1"/>
</dbReference>
<dbReference type="FunFam" id="3.10.290.10:FF:000001">
    <property type="entry name" value="30S ribosomal protein S4"/>
    <property type="match status" value="1"/>
</dbReference>
<dbReference type="Gene3D" id="1.10.1050.10">
    <property type="entry name" value="Ribosomal Protein S4 Delta 41, Chain A, domain 1"/>
    <property type="match status" value="1"/>
</dbReference>
<dbReference type="Gene3D" id="3.10.290.10">
    <property type="entry name" value="RNA-binding S4 domain"/>
    <property type="match status" value="1"/>
</dbReference>
<dbReference type="HAMAP" id="MF_01306_B">
    <property type="entry name" value="Ribosomal_uS4_B"/>
    <property type="match status" value="1"/>
</dbReference>
<dbReference type="InterPro" id="IPR022801">
    <property type="entry name" value="Ribosomal_uS4"/>
</dbReference>
<dbReference type="InterPro" id="IPR005709">
    <property type="entry name" value="Ribosomal_uS4_bac-type"/>
</dbReference>
<dbReference type="InterPro" id="IPR018079">
    <property type="entry name" value="Ribosomal_uS4_CS"/>
</dbReference>
<dbReference type="InterPro" id="IPR001912">
    <property type="entry name" value="Ribosomal_uS4_N"/>
</dbReference>
<dbReference type="InterPro" id="IPR002942">
    <property type="entry name" value="S4_RNA-bd"/>
</dbReference>
<dbReference type="InterPro" id="IPR036986">
    <property type="entry name" value="S4_RNA-bd_sf"/>
</dbReference>
<dbReference type="NCBIfam" id="NF003717">
    <property type="entry name" value="PRK05327.1"/>
    <property type="match status" value="1"/>
</dbReference>
<dbReference type="NCBIfam" id="TIGR01017">
    <property type="entry name" value="rpsD_bact"/>
    <property type="match status" value="1"/>
</dbReference>
<dbReference type="PANTHER" id="PTHR11831">
    <property type="entry name" value="30S 40S RIBOSOMAL PROTEIN"/>
    <property type="match status" value="1"/>
</dbReference>
<dbReference type="PANTHER" id="PTHR11831:SF4">
    <property type="entry name" value="SMALL RIBOSOMAL SUBUNIT PROTEIN US4M"/>
    <property type="match status" value="1"/>
</dbReference>
<dbReference type="Pfam" id="PF00163">
    <property type="entry name" value="Ribosomal_S4"/>
    <property type="match status" value="1"/>
</dbReference>
<dbReference type="Pfam" id="PF01479">
    <property type="entry name" value="S4"/>
    <property type="match status" value="1"/>
</dbReference>
<dbReference type="SMART" id="SM01390">
    <property type="entry name" value="Ribosomal_S4"/>
    <property type="match status" value="1"/>
</dbReference>
<dbReference type="SMART" id="SM00363">
    <property type="entry name" value="S4"/>
    <property type="match status" value="1"/>
</dbReference>
<dbReference type="SUPFAM" id="SSF55174">
    <property type="entry name" value="Alpha-L RNA-binding motif"/>
    <property type="match status" value="1"/>
</dbReference>
<dbReference type="PROSITE" id="PS00632">
    <property type="entry name" value="RIBOSOMAL_S4"/>
    <property type="match status" value="1"/>
</dbReference>
<dbReference type="PROSITE" id="PS50889">
    <property type="entry name" value="S4"/>
    <property type="match status" value="1"/>
</dbReference>
<sequence>MARYRGAVERLERRFGVSLALKGERRLSGKSALDKRAYGPGQHGQRRAKTSDYGLQLKEKQKAKMMYGISEKQFRSIFVEANRLDGNTGENLIRLIERRLDNVVYRMGFATTRSSARQLVTHGHVLVDGKRLDIPSYFVRSGQKIEIKEKTKSNPQVVRAMELTAQTGIVPWIDVEKDKKYGIFTRYPEREEVVVPIEERLIVELYSK</sequence>
<gene>
    <name evidence="1" type="primary">rpsD</name>
    <name type="ordered locus">Hac_0159</name>
</gene>
<keyword id="KW-0687">Ribonucleoprotein</keyword>
<keyword id="KW-0689">Ribosomal protein</keyword>
<keyword id="KW-0694">RNA-binding</keyword>
<keyword id="KW-0699">rRNA-binding</keyword>
<organism>
    <name type="scientific">Helicobacter acinonychis (strain Sheeba)</name>
    <dbReference type="NCBI Taxonomy" id="382638"/>
    <lineage>
        <taxon>Bacteria</taxon>
        <taxon>Pseudomonadati</taxon>
        <taxon>Campylobacterota</taxon>
        <taxon>Epsilonproteobacteria</taxon>
        <taxon>Campylobacterales</taxon>
        <taxon>Helicobacteraceae</taxon>
        <taxon>Helicobacter</taxon>
    </lineage>
</organism>
<comment type="function">
    <text evidence="1">One of the primary rRNA binding proteins, it binds directly to 16S rRNA where it nucleates assembly of the body of the 30S subunit.</text>
</comment>
<comment type="function">
    <text evidence="1">With S5 and S12 plays an important role in translational accuracy.</text>
</comment>
<comment type="subunit">
    <text evidence="1">Part of the 30S ribosomal subunit. Contacts protein S5. The interaction surface between S4 and S5 is involved in control of translational fidelity.</text>
</comment>
<comment type="similarity">
    <text evidence="1">Belongs to the universal ribosomal protein uS4 family.</text>
</comment>
<name>RS4_HELAH</name>
<proteinExistence type="inferred from homology"/>
<feature type="chain" id="PRO_0000293291" description="Small ribosomal subunit protein uS4">
    <location>
        <begin position="1"/>
        <end position="208"/>
    </location>
</feature>
<feature type="domain" description="S4 RNA-binding" evidence="1">
    <location>
        <begin position="98"/>
        <end position="161"/>
    </location>
</feature>
<accession>Q17ZB5</accession>
<protein>
    <recommendedName>
        <fullName evidence="1">Small ribosomal subunit protein uS4</fullName>
    </recommendedName>
    <alternativeName>
        <fullName evidence="2">30S ribosomal protein S4</fullName>
    </alternativeName>
</protein>
<evidence type="ECO:0000255" key="1">
    <source>
        <dbReference type="HAMAP-Rule" id="MF_01306"/>
    </source>
</evidence>
<evidence type="ECO:0000305" key="2"/>